<reference key="1">
    <citation type="journal article" date="2003" name="J. Virol. Methods">
        <title>An improved method for recovering rabies virus from cloned cDNA.</title>
        <authorList>
            <person name="Inoue K."/>
            <person name="Shoji Y."/>
            <person name="Kurane I."/>
            <person name="Iijima T."/>
            <person name="Sakai T."/>
            <person name="Morimoto K."/>
        </authorList>
    </citation>
    <scope>NUCLEOTIDE SEQUENCE [GENOMIC RNA]</scope>
</reference>
<reference key="2">
    <citation type="journal article" date="1998" name="J. Virol.">
        <title>Mapping the interacting domains between the rabies virus polymerase and phosphoprotein.</title>
        <authorList>
            <person name="Chenik M."/>
            <person name="Schnell M."/>
            <person name="Conzelmann K.K."/>
            <person name="Blondel D."/>
        </authorList>
    </citation>
    <scope>INTERACTION WITH PROTEIN P</scope>
    <source>
        <strain>CVS</strain>
    </source>
</reference>
<evidence type="ECO:0000250" key="1">
    <source>
        <dbReference type="UniProtKB" id="P03523"/>
    </source>
</evidence>
<evidence type="ECO:0000250" key="2">
    <source>
        <dbReference type="UniProtKB" id="P28887"/>
    </source>
</evidence>
<evidence type="ECO:0000255" key="3">
    <source>
        <dbReference type="PROSITE-ProRule" id="PRU00539"/>
    </source>
</evidence>
<evidence type="ECO:0000255" key="4">
    <source>
        <dbReference type="PROSITE-ProRule" id="PRU00923"/>
    </source>
</evidence>
<evidence type="ECO:0000256" key="5">
    <source>
        <dbReference type="SAM" id="MobiDB-lite"/>
    </source>
</evidence>
<evidence type="ECO:0000305" key="6"/>
<feature type="chain" id="PRO_0000294421" description="Large structural protein">
    <location>
        <begin position="1"/>
        <end position="2127"/>
    </location>
</feature>
<feature type="domain" description="RdRp catalytic" evidence="3">
    <location>
        <begin position="611"/>
        <end position="799"/>
    </location>
</feature>
<feature type="domain" description="Mononegavirus-type SAM-dependent 2'-O-MTase" evidence="4">
    <location>
        <begin position="1674"/>
        <end position="1871"/>
    </location>
</feature>
<feature type="region of interest" description="Disordered" evidence="5">
    <location>
        <begin position="1"/>
        <end position="27"/>
    </location>
</feature>
<feature type="region of interest" description="Interaction with P protein">
    <location>
        <begin position="1562"/>
        <end position="2127"/>
    </location>
</feature>
<feature type="compositionally biased region" description="Acidic residues" evidence="5">
    <location>
        <begin position="1"/>
        <end position="18"/>
    </location>
</feature>
<gene>
    <name type="primary">L</name>
</gene>
<dbReference type="EC" id="2.7.7.48" evidence="2"/>
<dbReference type="EC" id="3.6.1.-" evidence="1"/>
<dbReference type="EC" id="2.7.7.88" evidence="1"/>
<dbReference type="EC" id="2.1.1.375" evidence="1"/>
<dbReference type="EMBL" id="AB085828">
    <property type="protein sequence ID" value="BAC53869.1"/>
    <property type="molecule type" value="Genomic_RNA"/>
</dbReference>
<dbReference type="SMR" id="Q8B6J5"/>
<dbReference type="Proteomes" id="UP000006846">
    <property type="component" value="Genome"/>
</dbReference>
<dbReference type="GO" id="GO:0030430">
    <property type="term" value="C:host cell cytoplasm"/>
    <property type="evidence" value="ECO:0007669"/>
    <property type="project" value="UniProtKB-SubCell"/>
</dbReference>
<dbReference type="GO" id="GO:0044423">
    <property type="term" value="C:virion component"/>
    <property type="evidence" value="ECO:0007669"/>
    <property type="project" value="UniProtKB-KW"/>
</dbReference>
<dbReference type="GO" id="GO:0005524">
    <property type="term" value="F:ATP binding"/>
    <property type="evidence" value="ECO:0007669"/>
    <property type="project" value="UniProtKB-KW"/>
</dbReference>
<dbReference type="GO" id="GO:0003924">
    <property type="term" value="F:GTPase activity"/>
    <property type="evidence" value="ECO:0007669"/>
    <property type="project" value="RHEA"/>
</dbReference>
<dbReference type="GO" id="GO:0004482">
    <property type="term" value="F:mRNA 5'-cap (guanine-N7-)-methyltransferase activity"/>
    <property type="evidence" value="ECO:0007669"/>
    <property type="project" value="InterPro"/>
</dbReference>
<dbReference type="GO" id="GO:0003968">
    <property type="term" value="F:RNA-directed RNA polymerase activity"/>
    <property type="evidence" value="ECO:0007669"/>
    <property type="project" value="UniProtKB-KW"/>
</dbReference>
<dbReference type="GO" id="GO:0039689">
    <property type="term" value="P:negative stranded viral RNA replication"/>
    <property type="evidence" value="ECO:0000250"/>
    <property type="project" value="UniProtKB"/>
</dbReference>
<dbReference type="InterPro" id="IPR039530">
    <property type="entry name" value="L_methyltransferase_rhabdo"/>
</dbReference>
<dbReference type="InterPro" id="IPR039736">
    <property type="entry name" value="L_poly_C"/>
</dbReference>
<dbReference type="InterPro" id="IPR048398">
    <property type="entry name" value="Methyltrans_Mon_C"/>
</dbReference>
<dbReference type="InterPro" id="IPR048397">
    <property type="entry name" value="Methyltrans_Mon_CD"/>
</dbReference>
<dbReference type="InterPro" id="IPR026890">
    <property type="entry name" value="Mononeg_mRNAcap"/>
</dbReference>
<dbReference type="InterPro" id="IPR014023">
    <property type="entry name" value="Mononeg_RNA_pol_cat"/>
</dbReference>
<dbReference type="InterPro" id="IPR025786">
    <property type="entry name" value="Mononega_L_MeTrfase"/>
</dbReference>
<dbReference type="InterPro" id="IPR017234">
    <property type="entry name" value="RNA-dir_pol_rhabdovirus"/>
</dbReference>
<dbReference type="NCBIfam" id="TIGR04198">
    <property type="entry name" value="paramyx_RNAcap"/>
    <property type="match status" value="1"/>
</dbReference>
<dbReference type="Pfam" id="PF21080">
    <property type="entry name" value="Methyltrans_Mon_1st"/>
    <property type="match status" value="1"/>
</dbReference>
<dbReference type="Pfam" id="PF14314">
    <property type="entry name" value="Methyltrans_Mon_2nd"/>
    <property type="match status" value="1"/>
</dbReference>
<dbReference type="Pfam" id="PF21081">
    <property type="entry name" value="Methyltrans_Mon_3rd"/>
    <property type="match status" value="1"/>
</dbReference>
<dbReference type="Pfam" id="PF14318">
    <property type="entry name" value="Mononeg_mRNAcap"/>
    <property type="match status" value="1"/>
</dbReference>
<dbReference type="Pfam" id="PF00946">
    <property type="entry name" value="Mononeg_RNA_pol"/>
    <property type="match status" value="1"/>
</dbReference>
<dbReference type="PIRSF" id="PIRSF037546">
    <property type="entry name" value="RNA_pol_RhabdoV_sub"/>
    <property type="match status" value="1"/>
</dbReference>
<dbReference type="PROSITE" id="PS50526">
    <property type="entry name" value="RDRP_SSRNA_NEG_NONSEG"/>
    <property type="match status" value="1"/>
</dbReference>
<dbReference type="PROSITE" id="PS51590">
    <property type="entry name" value="SAM_MT_MNV_L"/>
    <property type="match status" value="1"/>
</dbReference>
<keyword id="KW-0067">ATP-binding</keyword>
<keyword id="KW-1035">Host cytoplasm</keyword>
<keyword id="KW-0378">Hydrolase</keyword>
<keyword id="KW-0489">Methyltransferase</keyword>
<keyword id="KW-0506">mRNA capping</keyword>
<keyword id="KW-0507">mRNA processing</keyword>
<keyword id="KW-0511">Multifunctional enzyme</keyword>
<keyword id="KW-0547">Nucleotide-binding</keyword>
<keyword id="KW-0548">Nucleotidyltransferase</keyword>
<keyword id="KW-0696">RNA-directed RNA polymerase</keyword>
<keyword id="KW-0949">S-adenosyl-L-methionine</keyword>
<keyword id="KW-0808">Transferase</keyword>
<keyword id="KW-0693">Viral RNA replication</keyword>
<keyword id="KW-0946">Virion</keyword>
<accession>Q8B6J5</accession>
<comment type="function">
    <text evidence="1">RNA-directed RNA polymerase that catalyzes the transcription of viral mRNAs, their capping and polyadenylation. The template is composed of the viral RNA tightly encapsidated by the nucleoprotein (N). The viral polymerase binds to the genomic RNA at the 3' leader promoter, and transcribes subsequently all viral mRNAs with a decreasing efficiency. The first gene is the most transcribed, and the last the least transcribed. The viral phosphoprotein acts as a processivity factor. Capping is concomitant with initiation of mRNA transcription. Indeed, a GDP polyribonucleotidyl transferase (PRNTase) adds the cap structure when the nascent RNA chain length has reached few nucleotides. Ribose 2'-O methylation of viral mRNA cap precedes and facilitates subsequent guanine-N-7 methylation, both activities being carried by the viral polymerase. Polyadenylation of mRNAs occur by a stuttering mechanism at a slipery stop site present at the end viral genes. After finishing transcription of a mRNA, the polymerase can resume transcription of the downstream gene.</text>
</comment>
<comment type="function">
    <text evidence="1">RNA-directed RNA polymerase that catalyzes the replication of viral genomic RNA. The template is composed of the viral RNA tightly encapsidated by the nucleoprotein (N). The replicase mode is dependent on intracellular N protein concentration. In this mode, the polymerase replicates the whole viral genome without recognizing transcriptional signals, and the replicated genome is not caped or polyadenylated.</text>
</comment>
<comment type="catalytic activity">
    <reaction evidence="3">
        <text>RNA(n) + a ribonucleoside 5'-triphosphate = RNA(n+1) + diphosphate</text>
        <dbReference type="Rhea" id="RHEA:21248"/>
        <dbReference type="Rhea" id="RHEA-COMP:14527"/>
        <dbReference type="Rhea" id="RHEA-COMP:17342"/>
        <dbReference type="ChEBI" id="CHEBI:33019"/>
        <dbReference type="ChEBI" id="CHEBI:61557"/>
        <dbReference type="ChEBI" id="CHEBI:140395"/>
        <dbReference type="EC" id="2.7.7.48"/>
    </reaction>
</comment>
<comment type="catalytic activity">
    <reaction evidence="1">
        <text>a 5'-end (5'-triphosphoguanosine)-adenylyl-adenylyl-cytidylyl-adenosine in mRNA + 2 S-adenosyl-L-methionine = a 5'-end (N(7)-methyl 5'-triphosphoguanosine)-(2'-O-methyladenylyl)-adenylyl-cytidylyl-adenosine in mRNA + 2 S-adenosyl-L-homocysteine + H(+)</text>
        <dbReference type="Rhea" id="RHEA:65376"/>
        <dbReference type="Rhea" id="RHEA-COMP:16797"/>
        <dbReference type="Rhea" id="RHEA-COMP:16798"/>
        <dbReference type="ChEBI" id="CHEBI:15378"/>
        <dbReference type="ChEBI" id="CHEBI:57856"/>
        <dbReference type="ChEBI" id="CHEBI:59789"/>
        <dbReference type="ChEBI" id="CHEBI:156483"/>
        <dbReference type="ChEBI" id="CHEBI:156484"/>
        <dbReference type="EC" id="2.1.1.375"/>
    </reaction>
</comment>
<comment type="catalytic activity">
    <reaction evidence="1">
        <text>a 5'-end (5'-triphosphoguanosine)-adenylyl-adenylyl-cytidylyl-adenosine in mRNA + S-adenosyl-L-methionine = a 5'-end (5'-triphosphoguanosine)-(2'-O-methyladenylyl)-adenylyl-cytidylyl-adenosine in mRNA + S-adenosyl-L-homocysteine + H(+)</text>
        <dbReference type="Rhea" id="RHEA:65380"/>
        <dbReference type="Rhea" id="RHEA-COMP:16797"/>
        <dbReference type="Rhea" id="RHEA-COMP:16801"/>
        <dbReference type="ChEBI" id="CHEBI:15378"/>
        <dbReference type="ChEBI" id="CHEBI:57856"/>
        <dbReference type="ChEBI" id="CHEBI:59789"/>
        <dbReference type="ChEBI" id="CHEBI:156482"/>
        <dbReference type="ChEBI" id="CHEBI:156484"/>
    </reaction>
</comment>
<comment type="catalytic activity">
    <reaction evidence="2">
        <text>a 5'-end triphospho-adenylyl-adenylyl-cytidylyl-adenosine in mRNA + GDP + H(+) = a 5'-end (5'-triphosphoguanosine)-adenylyl-adenylyl-cytidylyl-adenosine in mRNA + diphosphate</text>
        <dbReference type="Rhea" id="RHEA:65436"/>
        <dbReference type="Rhea" id="RHEA-COMP:16797"/>
        <dbReference type="Rhea" id="RHEA-COMP:16799"/>
        <dbReference type="ChEBI" id="CHEBI:15378"/>
        <dbReference type="ChEBI" id="CHEBI:33019"/>
        <dbReference type="ChEBI" id="CHEBI:58189"/>
        <dbReference type="ChEBI" id="CHEBI:156484"/>
        <dbReference type="ChEBI" id="CHEBI:156503"/>
        <dbReference type="EC" id="2.7.7.88"/>
    </reaction>
</comment>
<comment type="catalytic activity">
    <reaction evidence="1">
        <text>a 5'-end (5'-triphosphoguanosine)-(2'-O-methyladenylyl)-adenylyl-cytidylyl-adenosine in mRNA + S-adenosyl-L-methionine = a 5'-end (N(7)-methyl 5'-triphosphoguanosine)-(2'-O-methyladenylyl)-adenylyl-cytidylyl-adenosine in mRNA + S-adenosyl-L-homocysteine</text>
        <dbReference type="Rhea" id="RHEA:65440"/>
        <dbReference type="Rhea" id="RHEA-COMP:16798"/>
        <dbReference type="Rhea" id="RHEA-COMP:16801"/>
        <dbReference type="ChEBI" id="CHEBI:57856"/>
        <dbReference type="ChEBI" id="CHEBI:59789"/>
        <dbReference type="ChEBI" id="CHEBI:156482"/>
        <dbReference type="ChEBI" id="CHEBI:156483"/>
    </reaction>
</comment>
<comment type="catalytic activity">
    <reaction evidence="2">
        <text>GTP + H2O = GDP + phosphate + H(+)</text>
        <dbReference type="Rhea" id="RHEA:19669"/>
        <dbReference type="ChEBI" id="CHEBI:15377"/>
        <dbReference type="ChEBI" id="CHEBI:15378"/>
        <dbReference type="ChEBI" id="CHEBI:37565"/>
        <dbReference type="ChEBI" id="CHEBI:43474"/>
        <dbReference type="ChEBI" id="CHEBI:58189"/>
    </reaction>
</comment>
<comment type="subunit">
    <text evidence="1">May form homodimer. Interacts with the P protein.</text>
</comment>
<comment type="subcellular location">
    <subcellularLocation>
        <location evidence="1">Virion</location>
    </subcellularLocation>
    <subcellularLocation>
        <location evidence="1">Host cytoplasm</location>
    </subcellularLocation>
    <text evidence="1">L and P are packaged asymmetrically towards the blunt end of the virus.</text>
</comment>
<comment type="similarity">
    <text evidence="6">Belongs to the rhabdoviruses protein L family.</text>
</comment>
<organism>
    <name type="scientific">Rabies virus (strain HEP-Flury)</name>
    <name type="common">RABV</name>
    <dbReference type="NCBI Taxonomy" id="11296"/>
    <lineage>
        <taxon>Viruses</taxon>
        <taxon>Riboviria</taxon>
        <taxon>Orthornavirae</taxon>
        <taxon>Negarnaviricota</taxon>
        <taxon>Haploviricotina</taxon>
        <taxon>Monjiviricetes</taxon>
        <taxon>Mononegavirales</taxon>
        <taxon>Rhabdoviridae</taxon>
        <taxon>Alpharhabdovirinae</taxon>
        <taxon>Lyssavirus</taxon>
        <taxon>Lyssavirus rabies</taxon>
    </lineage>
</organism>
<protein>
    <recommendedName>
        <fullName>Large structural protein</fullName>
        <shortName>Protein L</shortName>
    </recommendedName>
    <alternativeName>
        <fullName>Replicase</fullName>
    </alternativeName>
    <alternativeName>
        <fullName>Transcriptase</fullName>
    </alternativeName>
    <domain>
        <recommendedName>
            <fullName>RNA-directed RNA polymerase</fullName>
            <ecNumber evidence="2">2.7.7.48</ecNumber>
        </recommendedName>
    </domain>
    <domain>
        <recommendedName>
            <fullName evidence="1">GTP phosphohydrolase</fullName>
            <ecNumber evidence="1">3.6.1.-</ecNumber>
        </recommendedName>
    </domain>
    <domain>
        <recommendedName>
            <fullName evidence="6">GDP polyribonucleotidyltransferase</fullName>
            <ecNumber evidence="1">2.7.7.88</ecNumber>
        </recommendedName>
        <alternativeName>
            <fullName evidence="6">PRNTase</fullName>
        </alternativeName>
    </domain>
    <domain>
        <recommendedName>
            <fullName evidence="6">mRNA cap methyltransferase</fullName>
            <ecNumber evidence="1">2.1.1.375</ecNumber>
        </recommendedName>
        <alternativeName>
            <fullName evidence="1">mRNA (guanine-N(7)-)-methyltransferase</fullName>
            <shortName evidence="1">G-N7-MTase</shortName>
        </alternativeName>
        <alternativeName>
            <fullName evidence="1">mRNA (nucleoside-2'-O-)-methyltransferase</fullName>
            <shortName evidence="1">N1-2'-O-MTase</shortName>
        </alternativeName>
    </domain>
</protein>
<proteinExistence type="evidence at protein level"/>
<name>L_RABVH</name>
<sequence length="2127" mass="242955">MLDPGEVYDDPIDPIESEAEPRGTPTVPNILRNSDYNLNSPLIEDSAKLMLEWLKTGNRPYRMTLTDNCSRSYKDLKDYFKKVDLGSLKVGGTAAQSMISLWLYGAHSESNRSRRCITDLAHFYSKSSPIEKLLNCTLGNRGLRIPPEGVLSCLERVDYDKAFGRYLANTYSSYLFFHVITLYMNALDWEEEKTILALWKDLTSVDTGKDLVKFKDQIWGLLIVTKDFVYSQSSNCLFDRNYTLMLKDLFLSRFNSLMILLSPPEPRYSDDLISQLCQLYIAGDQVLSLCGNSGYEVIKILEPYVVNSLVQRAEKFRPLIHSLGDFPMFIKDKVNQLEGTFGPSAKRFFRVLDQFDNIHDLVFVYGCYRHWGHPYIDYRKGLLKLYDQVHIKKVIDKSYQECLASDLARRILRWGFDKYSKWYLDSRFLARDHPLAPYIKTQTWPPKHIVDLVGDTWHKLPITQIFEIPESMDPSEILDDKSHSFTRTRLASWLSENRGGPVPSEKVIITALSQPPVNPREFLKSIDLGGLPDDDLIIGLRPKERELKIEGRFFALMSWNLRLYFVITEKLLANYILPLFDALTMTDNLNKVFKKLIDRVTGQGLLDYSRVTYAFHLDYEKWNNHQRLESTEDVFSVLDQVFGLKRVFSRTHEFFQKSWIYYSDRSDLIGLREDQIYCLDMSNGPTCWNGQDGGLEGLRQKGWSLVSLLMIDRESQTRNTRTKILAQGDNQVLCPTYMLSPGLSQEGLLYELESISRNALSIYRAIEEGASKLGLIIKKEETMCSYDFLIYGKTPLFRGNILVPESKRWARVSCISNDQIVNLANIMSTVSTNALTVAQHSQSLIKPMRDFLLMSVQAVFHYLLFSPILKGRVYKILSAEGESFLLAMSRIIYLDPSLGGVSGMSLGRFHIRQFSDPVSEGLSFWREIWLSSHESWIHALCQEAGNPDLGERTLESFTRLLEDPTTLNIKGGASPTILLKDAIRKALYDEVDKVENSEFREAILLSKTHRDNFILFLKSVEPLFPRFLSELFSSSFLGIPESIIGLIQNSRTIRRQFRKSLSRTLEESFYNSEIHGINRMTQTPQRVGRVWPCSSERADLLREISWGRKVVGTTVPHPSEMLGLLPKSSISCTCGATGGGNPRVSVSVLPSFDQSFFSRGPLKGYLGSSTSMSTQLFHAWEKVTNVHVVKRAISLKESINWFINRNSNLAQTLIRNIMSLTGPDFSLEEAPVFKRTGSALHRFKSARYSEGGYSSVCPNLLSHISVSTDTMSDLTQDGKNYDFMFQPLMLYAQTWTSELVQRDTRLRDSTFHWHLRCNRCVRPIEDITLETSQIFEFPDVSKRISRMVSGAVPHFQKLPDIRLRPGDFESLSGREKSRHIGSAQGLLYSILVAIHDSGYNDGTIFPVNIYGKVSPRDYLRGLARGILIGSSICFLTRMTNINIKRPLELISGVISYILLRLDNHPSLYIMLREPSLRGEIFSIPQKIPAAYPTTMKEGNRSILCYLQHVLRYEREVITASPENDWLWIFSDFRSAKMTYLTLITYQSHLLLQRVERNLSKSMRATLQQMGSLMRQVLGGHGEDTLESDDDIQRLLKDSLRRTRWVDQEVRHAARTMSGDYSPNKRVSRKAGCSEWVCSAQQVAVSTSANPAPVSELDIRALSKRFQNPLISGLRVVQWATGAHYKLKPILDDLNVFPSLCLVVGDGSGGISRAVLNMFPDSKLVFNSLLEVNDLMASGTRPLPPSAIMSGGDDIISRVIDFDSIWEKPSDLRNLATWRYFQSVQKQVNMSYDLIICDAEVTDIASINRITLLMSDFALSIDGPLYLVFKTYGTMLVNPDYKAIQHLSRAFPSVTGFITQVTSSFSSELYLRFSKRGKFFRDAEYLTSSTLREMSLVLFNCSSPKSEMQRARSLNYQDLVRGFPEEIISNPYNEMIITLIDSDVESFLVHKMVDDLELQRGTLSKVAIIISIMIVFSNRVFNISKPLTDPLFYPPSDPKILRHFNICCSTMMYLSTALGDVPSFARLHDLYNRPITYYFRKQVIRGNIYLSWSWSDDTPVFKRVACNSSLSLSSHWIRLIYKIVKTTRLVGRIEDLSGEVERHLHGYNRWITLEDIRSRSSLLDYSCL</sequence>
<organismHost>
    <name type="scientific">Homo sapiens</name>
    <name type="common">Human</name>
    <dbReference type="NCBI Taxonomy" id="9606"/>
</organismHost>
<organismHost>
    <name type="scientific">Mammalia</name>
    <dbReference type="NCBI Taxonomy" id="40674"/>
</organismHost>